<proteinExistence type="inferred from homology"/>
<protein>
    <recommendedName>
        <fullName evidence="1">UPF0145 protein HH_1800</fullName>
    </recommendedName>
</protein>
<evidence type="ECO:0000255" key="1">
    <source>
        <dbReference type="HAMAP-Rule" id="MF_00338"/>
    </source>
</evidence>
<gene>
    <name type="ordered locus">HH_1800</name>
</gene>
<accession>Q7VF77</accession>
<name>Y1800_HELHP</name>
<reference key="1">
    <citation type="journal article" date="2003" name="Proc. Natl. Acad. Sci. U.S.A.">
        <title>The complete genome sequence of the carcinogenic bacterium Helicobacter hepaticus.</title>
        <authorList>
            <person name="Suerbaum S."/>
            <person name="Josenhans C."/>
            <person name="Sterzenbach T."/>
            <person name="Drescher B."/>
            <person name="Brandt P."/>
            <person name="Bell M."/>
            <person name="Droege M."/>
            <person name="Fartmann B."/>
            <person name="Fischer H.-P."/>
            <person name="Ge Z."/>
            <person name="Hoerster A."/>
            <person name="Holland R."/>
            <person name="Klein K."/>
            <person name="Koenig J."/>
            <person name="Macko L."/>
            <person name="Mendz G.L."/>
            <person name="Nyakatura G."/>
            <person name="Schauer D.B."/>
            <person name="Shen Z."/>
            <person name="Weber J."/>
            <person name="Frosch M."/>
            <person name="Fox J.G."/>
        </authorList>
    </citation>
    <scope>NUCLEOTIDE SEQUENCE [LARGE SCALE GENOMIC DNA]</scope>
    <source>
        <strain>ATCC 51449 / 3B1</strain>
    </source>
</reference>
<sequence>MKLYSVAYIPQSYEVLGLVKGSMVQSKHIGRDIMAGLKGIVGGEIKGYTEMLNDARNIATDRMIEEAHALGANGIIGISYVTSSLMSNTSEVLVYGTAVKILS</sequence>
<organism>
    <name type="scientific">Helicobacter hepaticus (strain ATCC 51449 / 3B1)</name>
    <dbReference type="NCBI Taxonomy" id="235279"/>
    <lineage>
        <taxon>Bacteria</taxon>
        <taxon>Pseudomonadati</taxon>
        <taxon>Campylobacterota</taxon>
        <taxon>Epsilonproteobacteria</taxon>
        <taxon>Campylobacterales</taxon>
        <taxon>Helicobacteraceae</taxon>
        <taxon>Helicobacter</taxon>
    </lineage>
</organism>
<comment type="similarity">
    <text evidence="1">Belongs to the UPF0145 family.</text>
</comment>
<keyword id="KW-1185">Reference proteome</keyword>
<dbReference type="EMBL" id="AE017125">
    <property type="protein sequence ID" value="AAP78397.1"/>
    <property type="molecule type" value="Genomic_DNA"/>
</dbReference>
<dbReference type="RefSeq" id="WP_011116639.1">
    <property type="nucleotide sequence ID" value="NC_004917.1"/>
</dbReference>
<dbReference type="SMR" id="Q7VF77"/>
<dbReference type="STRING" id="235279.HH_1800"/>
<dbReference type="KEGG" id="hhe:HH_1800"/>
<dbReference type="eggNOG" id="COG0393">
    <property type="taxonomic scope" value="Bacteria"/>
</dbReference>
<dbReference type="HOGENOM" id="CLU_117144_1_2_7"/>
<dbReference type="OrthoDB" id="9796448at2"/>
<dbReference type="Proteomes" id="UP000002495">
    <property type="component" value="Chromosome"/>
</dbReference>
<dbReference type="Gene3D" id="3.30.110.70">
    <property type="entry name" value="Hypothetical protein apc22750. Chain B"/>
    <property type="match status" value="1"/>
</dbReference>
<dbReference type="HAMAP" id="MF_00338">
    <property type="entry name" value="UPF0145"/>
    <property type="match status" value="1"/>
</dbReference>
<dbReference type="InterPro" id="IPR035439">
    <property type="entry name" value="UPF0145_dom_sf"/>
</dbReference>
<dbReference type="InterPro" id="IPR002765">
    <property type="entry name" value="UPF0145_YbjQ-like"/>
</dbReference>
<dbReference type="PANTHER" id="PTHR34068:SF2">
    <property type="entry name" value="UPF0145 PROTEIN SCO3412"/>
    <property type="match status" value="1"/>
</dbReference>
<dbReference type="PANTHER" id="PTHR34068">
    <property type="entry name" value="UPF0145 PROTEIN YBJQ"/>
    <property type="match status" value="1"/>
</dbReference>
<dbReference type="Pfam" id="PF01906">
    <property type="entry name" value="YbjQ_1"/>
    <property type="match status" value="1"/>
</dbReference>
<dbReference type="SUPFAM" id="SSF117782">
    <property type="entry name" value="YbjQ-like"/>
    <property type="match status" value="1"/>
</dbReference>
<feature type="chain" id="PRO_0000225830" description="UPF0145 protein HH_1800">
    <location>
        <begin position="1"/>
        <end position="103"/>
    </location>
</feature>